<protein>
    <recommendedName>
        <fullName evidence="1">3-methyl-2-oxobutanoate hydroxymethyltransferase</fullName>
        <ecNumber evidence="1">2.1.2.11</ecNumber>
    </recommendedName>
    <alternativeName>
        <fullName evidence="1">Ketopantoate hydroxymethyltransferase</fullName>
        <shortName evidence="1">KPHMT</shortName>
    </alternativeName>
</protein>
<feature type="chain" id="PRO_1000096970" description="3-methyl-2-oxobutanoate hydroxymethyltransferase">
    <location>
        <begin position="1"/>
        <end position="274"/>
    </location>
</feature>
<feature type="active site" description="Proton acceptor" evidence="1">
    <location>
        <position position="184"/>
    </location>
</feature>
<feature type="binding site" evidence="1">
    <location>
        <begin position="46"/>
        <end position="47"/>
    </location>
    <ligand>
        <name>3-methyl-2-oxobutanoate</name>
        <dbReference type="ChEBI" id="CHEBI:11851"/>
    </ligand>
</feature>
<feature type="binding site" evidence="1">
    <location>
        <position position="46"/>
    </location>
    <ligand>
        <name>Mg(2+)</name>
        <dbReference type="ChEBI" id="CHEBI:18420"/>
    </ligand>
</feature>
<feature type="binding site" evidence="1">
    <location>
        <position position="85"/>
    </location>
    <ligand>
        <name>3-methyl-2-oxobutanoate</name>
        <dbReference type="ChEBI" id="CHEBI:11851"/>
    </ligand>
</feature>
<feature type="binding site" evidence="1">
    <location>
        <position position="85"/>
    </location>
    <ligand>
        <name>Mg(2+)</name>
        <dbReference type="ChEBI" id="CHEBI:18420"/>
    </ligand>
</feature>
<feature type="binding site" evidence="1">
    <location>
        <position position="115"/>
    </location>
    <ligand>
        <name>3-methyl-2-oxobutanoate</name>
        <dbReference type="ChEBI" id="CHEBI:11851"/>
    </ligand>
</feature>
<feature type="binding site" evidence="1">
    <location>
        <position position="117"/>
    </location>
    <ligand>
        <name>Mg(2+)</name>
        <dbReference type="ChEBI" id="CHEBI:18420"/>
    </ligand>
</feature>
<evidence type="ECO:0000255" key="1">
    <source>
        <dbReference type="HAMAP-Rule" id="MF_00156"/>
    </source>
</evidence>
<gene>
    <name evidence="1" type="primary">panB</name>
    <name type="ordered locus">OE_3119R</name>
</gene>
<dbReference type="EC" id="2.1.2.11" evidence="1"/>
<dbReference type="EMBL" id="AM774415">
    <property type="protein sequence ID" value="CAP14065.1"/>
    <property type="molecule type" value="Genomic_DNA"/>
</dbReference>
<dbReference type="RefSeq" id="WP_010903078.1">
    <property type="nucleotide sequence ID" value="NC_010364.1"/>
</dbReference>
<dbReference type="SMR" id="B0R5P8"/>
<dbReference type="EnsemblBacteria" id="CAP14065">
    <property type="protein sequence ID" value="CAP14065"/>
    <property type="gene ID" value="OE_3119R"/>
</dbReference>
<dbReference type="GeneID" id="68694189"/>
<dbReference type="KEGG" id="hsl:OE_3119R"/>
<dbReference type="HOGENOM" id="CLU_036645_1_0_2"/>
<dbReference type="PhylomeDB" id="B0R5P8"/>
<dbReference type="UniPathway" id="UPA00241"/>
<dbReference type="Proteomes" id="UP000001321">
    <property type="component" value="Chromosome"/>
</dbReference>
<dbReference type="GO" id="GO:0005737">
    <property type="term" value="C:cytoplasm"/>
    <property type="evidence" value="ECO:0007669"/>
    <property type="project" value="UniProtKB-SubCell"/>
</dbReference>
<dbReference type="GO" id="GO:0003864">
    <property type="term" value="F:3-methyl-2-oxobutanoate hydroxymethyltransferase activity"/>
    <property type="evidence" value="ECO:0007669"/>
    <property type="project" value="UniProtKB-UniRule"/>
</dbReference>
<dbReference type="GO" id="GO:0000287">
    <property type="term" value="F:magnesium ion binding"/>
    <property type="evidence" value="ECO:0007669"/>
    <property type="project" value="TreeGrafter"/>
</dbReference>
<dbReference type="GO" id="GO:0015937">
    <property type="term" value="P:coenzyme A biosynthetic process"/>
    <property type="evidence" value="ECO:0007669"/>
    <property type="project" value="UniProtKB-UniRule"/>
</dbReference>
<dbReference type="GO" id="GO:0015940">
    <property type="term" value="P:pantothenate biosynthetic process"/>
    <property type="evidence" value="ECO:0007669"/>
    <property type="project" value="InterPro"/>
</dbReference>
<dbReference type="CDD" id="cd06557">
    <property type="entry name" value="KPHMT-like"/>
    <property type="match status" value="1"/>
</dbReference>
<dbReference type="FunFam" id="3.20.20.60:FF:000003">
    <property type="entry name" value="3-methyl-2-oxobutanoate hydroxymethyltransferase"/>
    <property type="match status" value="1"/>
</dbReference>
<dbReference type="Gene3D" id="3.20.20.60">
    <property type="entry name" value="Phosphoenolpyruvate-binding domains"/>
    <property type="match status" value="1"/>
</dbReference>
<dbReference type="HAMAP" id="MF_00156">
    <property type="entry name" value="PanB"/>
    <property type="match status" value="1"/>
</dbReference>
<dbReference type="InterPro" id="IPR003700">
    <property type="entry name" value="Pantoate_hydroxy_MeTrfase"/>
</dbReference>
<dbReference type="InterPro" id="IPR015813">
    <property type="entry name" value="Pyrv/PenolPyrv_kinase-like_dom"/>
</dbReference>
<dbReference type="InterPro" id="IPR040442">
    <property type="entry name" value="Pyrv_kinase-like_dom_sf"/>
</dbReference>
<dbReference type="NCBIfam" id="TIGR00222">
    <property type="entry name" value="panB"/>
    <property type="match status" value="1"/>
</dbReference>
<dbReference type="NCBIfam" id="NF001452">
    <property type="entry name" value="PRK00311.1"/>
    <property type="match status" value="1"/>
</dbReference>
<dbReference type="PANTHER" id="PTHR20881">
    <property type="entry name" value="3-METHYL-2-OXOBUTANOATE HYDROXYMETHYLTRANSFERASE"/>
    <property type="match status" value="1"/>
</dbReference>
<dbReference type="PANTHER" id="PTHR20881:SF0">
    <property type="entry name" value="3-METHYL-2-OXOBUTANOATE HYDROXYMETHYLTRANSFERASE"/>
    <property type="match status" value="1"/>
</dbReference>
<dbReference type="Pfam" id="PF02548">
    <property type="entry name" value="Pantoate_transf"/>
    <property type="match status" value="1"/>
</dbReference>
<dbReference type="PIRSF" id="PIRSF000388">
    <property type="entry name" value="Pantoate_hydroxy_MeTrfase"/>
    <property type="match status" value="1"/>
</dbReference>
<dbReference type="SUPFAM" id="SSF51621">
    <property type="entry name" value="Phosphoenolpyruvate/pyruvate domain"/>
    <property type="match status" value="1"/>
</dbReference>
<organism>
    <name type="scientific">Halobacterium salinarum (strain ATCC 29341 / DSM 671 / R1)</name>
    <dbReference type="NCBI Taxonomy" id="478009"/>
    <lineage>
        <taxon>Archaea</taxon>
        <taxon>Methanobacteriati</taxon>
        <taxon>Methanobacteriota</taxon>
        <taxon>Stenosarchaea group</taxon>
        <taxon>Halobacteria</taxon>
        <taxon>Halobacteriales</taxon>
        <taxon>Halobacteriaceae</taxon>
        <taxon>Halobacterium</taxon>
        <taxon>Halobacterium salinarum NRC-34001</taxon>
    </lineage>
</organism>
<sequence>MPTVNSVRRAGNTDEETDPVTMLTAYDAPTASVVDDAGVDMILVGDSVGNAKLGYDTTLPVSVDEIASATGAVARATADAVVVADMPFLSFGADETESVRNAGRMLKEEDADAVKLESGPHTVSLTETLTSLGIPVMAHLGLTPQHVNQLGGYFRQGTDQDSAERMLDLARDHEAAGAFALVLEHVPANVAADITDAIDIPTIGIGAGPDTDGQVLVISDVIGMSERSPPFSKQFGDVNREMAAAVDDYVDAVESGSFPAAEHSHVADDVDDVY</sequence>
<proteinExistence type="inferred from homology"/>
<name>PANB_HALS3</name>
<reference key="1">
    <citation type="journal article" date="2008" name="Genomics">
        <title>Evolution in the laboratory: the genome of Halobacterium salinarum strain R1 compared to that of strain NRC-1.</title>
        <authorList>
            <person name="Pfeiffer F."/>
            <person name="Schuster S.C."/>
            <person name="Broicher A."/>
            <person name="Falb M."/>
            <person name="Palm P."/>
            <person name="Rodewald K."/>
            <person name="Ruepp A."/>
            <person name="Soppa J."/>
            <person name="Tittor J."/>
            <person name="Oesterhelt D."/>
        </authorList>
    </citation>
    <scope>NUCLEOTIDE SEQUENCE [LARGE SCALE GENOMIC DNA]</scope>
    <source>
        <strain>ATCC 29341 / DSM 671 / R1</strain>
    </source>
</reference>
<keyword id="KW-0173">Coenzyme A biosynthesis</keyword>
<keyword id="KW-0963">Cytoplasm</keyword>
<keyword id="KW-0460">Magnesium</keyword>
<keyword id="KW-0479">Metal-binding</keyword>
<keyword id="KW-0808">Transferase</keyword>
<comment type="function">
    <text evidence="1">Catalyzes the reversible reaction in which hydroxymethyl group from 5,10-methylenetetrahydrofolate is transferred onto alpha-ketoisovalerate to form ketopantoate.</text>
</comment>
<comment type="catalytic activity">
    <reaction evidence="1">
        <text>3-methyl-2-oxobutanoate + (6R)-5,10-methylene-5,6,7,8-tetrahydrofolate + H2O = 2-dehydropantoate + (6S)-5,6,7,8-tetrahydrofolate</text>
        <dbReference type="Rhea" id="RHEA:11824"/>
        <dbReference type="ChEBI" id="CHEBI:11561"/>
        <dbReference type="ChEBI" id="CHEBI:11851"/>
        <dbReference type="ChEBI" id="CHEBI:15377"/>
        <dbReference type="ChEBI" id="CHEBI:15636"/>
        <dbReference type="ChEBI" id="CHEBI:57453"/>
        <dbReference type="EC" id="2.1.2.11"/>
    </reaction>
</comment>
<comment type="cofactor">
    <cofactor evidence="1">
        <name>Mg(2+)</name>
        <dbReference type="ChEBI" id="CHEBI:18420"/>
    </cofactor>
    <text evidence="1">Binds 1 Mg(2+) ion per subunit.</text>
</comment>
<comment type="pathway">
    <text evidence="1">Cofactor biosynthesis; coenzyme A biosynthesis.</text>
</comment>
<comment type="subunit">
    <text evidence="1">Homodecamer; pentamer of dimers.</text>
</comment>
<comment type="subcellular location">
    <subcellularLocation>
        <location evidence="1">Cytoplasm</location>
    </subcellularLocation>
</comment>
<comment type="similarity">
    <text evidence="1">Belongs to the PanB family.</text>
</comment>
<accession>B0R5P8</accession>